<protein>
    <recommendedName>
        <fullName>Glyceraldehyde-3-phosphate dehydrogenase, glycosomal</fullName>
        <shortName>GAPDH</shortName>
        <ecNumber>1.2.1.12</ecNumber>
    </recommendedName>
</protein>
<accession>P22513</accession>
<proteinExistence type="evidence at protein level"/>
<reference key="1">
    <citation type="journal article" date="1990" name="EMBO J.">
        <title>Trypanosoma cruzi glycosomal glyceraldehyde-3-phosphate dehydrogenase does not conform to the 'hotspot' topogenic signal model.</title>
        <authorList>
            <person name="Kendall G."/>
            <person name="Wilderspin A.F."/>
            <person name="Ashall F."/>
            <person name="Miles M.A."/>
            <person name="Kelly J.M."/>
        </authorList>
    </citation>
    <scope>NUCLEOTIDE SEQUENCE [GENOMIC DNA]</scope>
    <source>
        <strain>X10/6</strain>
    </source>
</reference>
<reference key="2">
    <citation type="journal article" date="2002" name="FEBS Lett.">
        <title>Structure of Trypanosoma cruzi glycosomal glyceraldehyde-3-phosphate dehydrogenase complexed with chalepin, a natural product inhibitor, at 1.95 A resolution.</title>
        <authorList>
            <person name="Pavao F."/>
            <person name="Castilho M.S."/>
            <person name="Pupo M.T."/>
            <person name="Dias R.L.A."/>
            <person name="Correa A.G."/>
            <person name="Fernandes J.B."/>
            <person name="da Silva M.F.G.F."/>
            <person name="Mafezoli J."/>
            <person name="Vieira P.C."/>
            <person name="Oliva G."/>
        </authorList>
    </citation>
    <scope>X-RAY CRYSTALLOGRAPHY (1.95 ANGSTROMS) IN COMPLEX WITH CHALEPIN</scope>
    <scope>SUBUNIT</scope>
</reference>
<reference key="3">
    <citation type="journal article" date="2003" name="Biochemistry">
        <title>Evidence for the two phosphate binding sites of an analogue of the thioacyl intermediate for the Trypanosoma cruzi glyceraldehyde-3-phosphate dehydrogenase-catalyzed reaction, from its crystal structure.</title>
        <authorList>
            <person name="Castilho M.S."/>
            <person name="Pavao F."/>
            <person name="Oliva G."/>
            <person name="Ladame S."/>
            <person name="Willson M."/>
            <person name="Perie J."/>
        </authorList>
    </citation>
    <scope>X-RAY CRYSTALLOGRAPHY (2.0 ANGSTROMS) IN COMPLEX WITH NAD AND SUBSTRATE ANALOG</scope>
    <scope>SUBUNIT</scope>
</reference>
<reference key="4">
    <citation type="journal article" date="2003" name="Eur. J. Biochem.">
        <title>Crystal structure of Trypanosoma cruzi glyceraldehyde-3-phosphate dehydrogenase complexed with an analogue of 1,3-bisphospho-d-glyceric acid.</title>
        <authorList>
            <person name="Ladame S."/>
            <person name="Castilho M.S."/>
            <person name="Silva C.H.T.P."/>
            <person name="Denier C."/>
            <person name="Hannaert V."/>
            <person name="Perie J."/>
            <person name="Oliva G."/>
            <person name="Willson M."/>
        </authorList>
    </citation>
    <scope>X-RAY CRYSTALLOGRAPHY (2.75 ANGSTROMS) IN COMPLEX WITH NAD AND SUBSTRATE ANALOG</scope>
    <scope>SUBUNIT</scope>
</reference>
<name>G3PG_TRYCR</name>
<comment type="catalytic activity">
    <reaction evidence="2">
        <text>D-glyceraldehyde 3-phosphate + phosphate + NAD(+) = (2R)-3-phospho-glyceroyl phosphate + NADH + H(+)</text>
        <dbReference type="Rhea" id="RHEA:10300"/>
        <dbReference type="ChEBI" id="CHEBI:15378"/>
        <dbReference type="ChEBI" id="CHEBI:43474"/>
        <dbReference type="ChEBI" id="CHEBI:57540"/>
        <dbReference type="ChEBI" id="CHEBI:57604"/>
        <dbReference type="ChEBI" id="CHEBI:57945"/>
        <dbReference type="ChEBI" id="CHEBI:59776"/>
        <dbReference type="EC" id="1.2.1.12"/>
    </reaction>
</comment>
<comment type="pathway">
    <text>Carbohydrate degradation; glycolysis; pyruvate from D-glyceraldehyde 3-phosphate: step 1/5.</text>
</comment>
<comment type="subunit">
    <text evidence="3 4 5">Homotetramer.</text>
</comment>
<comment type="subcellular location">
    <subcellularLocation>
        <location>Glycosome</location>
    </subcellularLocation>
</comment>
<comment type="miscellaneous">
    <text>There are two identical genes that code for glycosomal GAPDH.</text>
</comment>
<comment type="similarity">
    <text evidence="6">Belongs to the glyceraldehyde-3-phosphate dehydrogenase family.</text>
</comment>
<dbReference type="EC" id="1.2.1.12"/>
<dbReference type="EMBL" id="X52898">
    <property type="protein sequence ID" value="CAA37080.1"/>
    <property type="molecule type" value="Genomic_DNA"/>
</dbReference>
<dbReference type="EMBL" id="X52898">
    <property type="protein sequence ID" value="CAA37079.1"/>
    <property type="molecule type" value="Genomic_DNA"/>
</dbReference>
<dbReference type="PIR" id="S12565">
    <property type="entry name" value="DEUT1C"/>
</dbReference>
<dbReference type="PDB" id="1K3T">
    <property type="method" value="X-ray"/>
    <property type="resolution" value="1.95 A"/>
    <property type="chains" value="A/B/C/D=1-359"/>
</dbReference>
<dbReference type="PDB" id="1ML3">
    <property type="method" value="X-ray"/>
    <property type="resolution" value="2.50 A"/>
    <property type="chains" value="A/B/C/D=1-359"/>
</dbReference>
<dbReference type="PDB" id="1QXS">
    <property type="method" value="X-ray"/>
    <property type="resolution" value="2.75 A"/>
    <property type="chains" value="A/B/C/D=1-359"/>
</dbReference>
<dbReference type="PDB" id="3DMT">
    <property type="method" value="X-ray"/>
    <property type="resolution" value="2.30 A"/>
    <property type="chains" value="A/B/C/D=1-359"/>
</dbReference>
<dbReference type="PDB" id="3IDS">
    <property type="method" value="X-ray"/>
    <property type="resolution" value="1.80 A"/>
    <property type="chains" value="A/B/C/D=1-359"/>
</dbReference>
<dbReference type="PDBsum" id="1K3T"/>
<dbReference type="PDBsum" id="1ML3"/>
<dbReference type="PDBsum" id="1QXS"/>
<dbReference type="PDBsum" id="3DMT"/>
<dbReference type="PDBsum" id="3IDS"/>
<dbReference type="SMR" id="P22513"/>
<dbReference type="BindingDB" id="P22513"/>
<dbReference type="ChEMBL" id="CHEMBL5926"/>
<dbReference type="DrugBank" id="DB02205">
    <property type="generic name" value="(+)-Rutamarin alcohol"/>
</dbReference>
<dbReference type="DrugBank" id="DB03211">
    <property type="generic name" value="(3-Formyl-but-3-Enyl)-Phosphonic Acid"/>
</dbReference>
<dbReference type="DrugBank" id="DB11820">
    <property type="generic name" value="Nifurtimox"/>
</dbReference>
<dbReference type="VEuPathDB" id="TriTrypDB:BCY84_03946"/>
<dbReference type="VEuPathDB" id="TriTrypDB:C3747_28g40"/>
<dbReference type="VEuPathDB" id="TriTrypDB:C4B63_18g232"/>
<dbReference type="VEuPathDB" id="TriTrypDB:C4B63_18g233"/>
<dbReference type="VEuPathDB" id="TriTrypDB:ECC02_000028"/>
<dbReference type="VEuPathDB" id="TriTrypDB:Tc_MARK_2044"/>
<dbReference type="VEuPathDB" id="TriTrypDB:TcBrA4_0027980"/>
<dbReference type="VEuPathDB" id="TriTrypDB:TcCL_ESM01054"/>
<dbReference type="VEuPathDB" id="TriTrypDB:TcCLB.506943.60"/>
<dbReference type="VEuPathDB" id="TriTrypDB:TcCLB.509065.60"/>
<dbReference type="VEuPathDB" id="TriTrypDB:TCDM_02134"/>
<dbReference type="VEuPathDB" id="TriTrypDB:TcG_01020"/>
<dbReference type="VEuPathDB" id="TriTrypDB:TCSYLVIO_003325"/>
<dbReference type="VEuPathDB" id="TriTrypDB:TCSYLVIO_003326"/>
<dbReference type="VEuPathDB" id="TriTrypDB:TcYC6_0098240"/>
<dbReference type="OrthoDB" id="239152at2759"/>
<dbReference type="BRENDA" id="1.2.1.12">
    <property type="organism ID" value="6524"/>
</dbReference>
<dbReference type="UniPathway" id="UPA00109">
    <property type="reaction ID" value="UER00184"/>
</dbReference>
<dbReference type="EvolutionaryTrace" id="P22513"/>
<dbReference type="GO" id="GO:0005829">
    <property type="term" value="C:cytosol"/>
    <property type="evidence" value="ECO:0007669"/>
    <property type="project" value="TreeGrafter"/>
</dbReference>
<dbReference type="GO" id="GO:0020015">
    <property type="term" value="C:glycosome"/>
    <property type="evidence" value="ECO:0007669"/>
    <property type="project" value="UniProtKB-SubCell"/>
</dbReference>
<dbReference type="GO" id="GO:0004365">
    <property type="term" value="F:glyceraldehyde-3-phosphate dehydrogenase (NAD+) (phosphorylating) activity"/>
    <property type="evidence" value="ECO:0007669"/>
    <property type="project" value="UniProtKB-EC"/>
</dbReference>
<dbReference type="GO" id="GO:0051287">
    <property type="term" value="F:NAD binding"/>
    <property type="evidence" value="ECO:0007669"/>
    <property type="project" value="InterPro"/>
</dbReference>
<dbReference type="GO" id="GO:0050661">
    <property type="term" value="F:NADP binding"/>
    <property type="evidence" value="ECO:0007669"/>
    <property type="project" value="InterPro"/>
</dbReference>
<dbReference type="GO" id="GO:0006006">
    <property type="term" value="P:glucose metabolic process"/>
    <property type="evidence" value="ECO:0007669"/>
    <property type="project" value="InterPro"/>
</dbReference>
<dbReference type="GO" id="GO:0006096">
    <property type="term" value="P:glycolytic process"/>
    <property type="evidence" value="ECO:0007669"/>
    <property type="project" value="UniProtKB-UniPathway"/>
</dbReference>
<dbReference type="CDD" id="cd18126">
    <property type="entry name" value="GAPDH_I_C"/>
    <property type="match status" value="1"/>
</dbReference>
<dbReference type="CDD" id="cd05214">
    <property type="entry name" value="GAPDH_I_N"/>
    <property type="match status" value="1"/>
</dbReference>
<dbReference type="FunFam" id="3.30.360.10:FF:000001">
    <property type="entry name" value="Glyceraldehyde-3-phosphate dehydrogenase"/>
    <property type="match status" value="1"/>
</dbReference>
<dbReference type="FunFam" id="3.40.50.720:FF:000001">
    <property type="entry name" value="Glyceraldehyde-3-phosphate dehydrogenase"/>
    <property type="match status" value="1"/>
</dbReference>
<dbReference type="Gene3D" id="3.30.360.10">
    <property type="entry name" value="Dihydrodipicolinate Reductase, domain 2"/>
    <property type="match status" value="1"/>
</dbReference>
<dbReference type="Gene3D" id="3.40.50.720">
    <property type="entry name" value="NAD(P)-binding Rossmann-like Domain"/>
    <property type="match status" value="1"/>
</dbReference>
<dbReference type="InterPro" id="IPR020831">
    <property type="entry name" value="GlycerAld/Erythrose_P_DH"/>
</dbReference>
<dbReference type="InterPro" id="IPR020830">
    <property type="entry name" value="GlycerAld_3-P_DH_AS"/>
</dbReference>
<dbReference type="InterPro" id="IPR020829">
    <property type="entry name" value="GlycerAld_3-P_DH_cat"/>
</dbReference>
<dbReference type="InterPro" id="IPR020828">
    <property type="entry name" value="GlycerAld_3-P_DH_NAD(P)-bd"/>
</dbReference>
<dbReference type="InterPro" id="IPR006424">
    <property type="entry name" value="Glyceraldehyde-3-P_DH_1"/>
</dbReference>
<dbReference type="InterPro" id="IPR036291">
    <property type="entry name" value="NAD(P)-bd_dom_sf"/>
</dbReference>
<dbReference type="NCBIfam" id="TIGR01534">
    <property type="entry name" value="GAPDH-I"/>
    <property type="match status" value="1"/>
</dbReference>
<dbReference type="PANTHER" id="PTHR10836">
    <property type="entry name" value="GLYCERALDEHYDE 3-PHOSPHATE DEHYDROGENASE"/>
    <property type="match status" value="1"/>
</dbReference>
<dbReference type="PANTHER" id="PTHR10836:SF76">
    <property type="entry name" value="GLYCERALDEHYDE-3-PHOSPHATE DEHYDROGENASE-RELATED"/>
    <property type="match status" value="1"/>
</dbReference>
<dbReference type="Pfam" id="PF02800">
    <property type="entry name" value="Gp_dh_C"/>
    <property type="match status" value="1"/>
</dbReference>
<dbReference type="Pfam" id="PF00044">
    <property type="entry name" value="Gp_dh_N"/>
    <property type="match status" value="1"/>
</dbReference>
<dbReference type="PIRSF" id="PIRSF000149">
    <property type="entry name" value="GAP_DH"/>
    <property type="match status" value="1"/>
</dbReference>
<dbReference type="PRINTS" id="PR00078">
    <property type="entry name" value="G3PDHDRGNASE"/>
</dbReference>
<dbReference type="SMART" id="SM00846">
    <property type="entry name" value="Gp_dh_N"/>
    <property type="match status" value="1"/>
</dbReference>
<dbReference type="SUPFAM" id="SSF55347">
    <property type="entry name" value="Glyceraldehyde-3-phosphate dehydrogenase-like, C-terminal domain"/>
    <property type="match status" value="1"/>
</dbReference>
<dbReference type="SUPFAM" id="SSF51735">
    <property type="entry name" value="NAD(P)-binding Rossmann-fold domains"/>
    <property type="match status" value="1"/>
</dbReference>
<dbReference type="PROSITE" id="PS00071">
    <property type="entry name" value="GAPDH"/>
    <property type="match status" value="1"/>
</dbReference>
<keyword id="KW-0002">3D-structure</keyword>
<keyword id="KW-0324">Glycolysis</keyword>
<keyword id="KW-0327">Glycosome</keyword>
<keyword id="KW-0520">NAD</keyword>
<keyword id="KW-0560">Oxidoreductase</keyword>
<keyword id="KW-0576">Peroxisome</keyword>
<evidence type="ECO:0000255" key="1"/>
<evidence type="ECO:0000255" key="2">
    <source>
        <dbReference type="PROSITE-ProRule" id="PRU10009"/>
    </source>
</evidence>
<evidence type="ECO:0000269" key="3">
    <source>
    </source>
</evidence>
<evidence type="ECO:0000269" key="4">
    <source>
    </source>
</evidence>
<evidence type="ECO:0000269" key="5">
    <source>
    </source>
</evidence>
<evidence type="ECO:0000305" key="6"/>
<evidence type="ECO:0007829" key="7">
    <source>
        <dbReference type="PDB" id="1ML3"/>
    </source>
</evidence>
<evidence type="ECO:0007829" key="8">
    <source>
        <dbReference type="PDB" id="3IDS"/>
    </source>
</evidence>
<sequence>MPIKVGINGFGRIGRMVFQALCEDGLLGTEIDVVAVVDMNTDAEYFAYQMRYDTVHGKFKYEVTTTKSSPSVAKDDTLVVNGHRILCVKAQRNPADLPWGKLGVEYVIESTGLFTAKAAAEGHLRGGARKVVISAPASGGAKTLVMGVNHHEYNPSEHHVVSNASCTTNCLAPIVHVLVKEGFGVQTGLMTTIHSYTATQKTVDGVSVKDWRGGRAAAVNIIPSTTGAAKAVGMVIPSTQGKLTGMSFRVPTPDVSVVDLTFTAARDTSIQEIDAALKRASKTYMKGILGYTDEELVSADFINDNRSSIYDSKATLQNNLPKERRFFKIVSWYDNEWGYSHRVVDLVRHMASKDRSARL</sequence>
<feature type="chain" id="PRO_0000145532" description="Glyceraldehyde-3-phosphate dehydrogenase, glycosomal">
    <location>
        <begin position="1"/>
        <end position="359"/>
    </location>
</feature>
<feature type="short sequence motif" description="Microbody targeting signal" evidence="1">
    <location>
        <begin position="357"/>
        <end position="359"/>
    </location>
</feature>
<feature type="active site" description="Nucleophile">
    <location>
        <position position="166"/>
    </location>
</feature>
<feature type="binding site" evidence="4 5">
    <location>
        <begin position="12"/>
        <end position="13"/>
    </location>
    <ligand>
        <name>NAD(+)</name>
        <dbReference type="ChEBI" id="CHEBI:57540"/>
    </ligand>
</feature>
<feature type="binding site" evidence="4 5">
    <location>
        <position position="38"/>
    </location>
    <ligand>
        <name>NAD(+)</name>
        <dbReference type="ChEBI" id="CHEBI:57540"/>
    </ligand>
</feature>
<feature type="binding site" evidence="4 5">
    <location>
        <position position="91"/>
    </location>
    <ligand>
        <name>NAD(+)</name>
        <dbReference type="ChEBI" id="CHEBI:57540"/>
    </ligand>
</feature>
<feature type="binding site" evidence="4 5">
    <location>
        <position position="134"/>
    </location>
    <ligand>
        <name>NAD(+)</name>
        <dbReference type="ChEBI" id="CHEBI:57540"/>
    </ligand>
</feature>
<feature type="binding site">
    <location>
        <begin position="165"/>
        <end position="167"/>
    </location>
    <ligand>
        <name>D-glyceraldehyde 3-phosphate</name>
        <dbReference type="ChEBI" id="CHEBI:59776"/>
    </ligand>
</feature>
<feature type="binding site">
    <location>
        <position position="197"/>
    </location>
    <ligand>
        <name>D-glyceraldehyde 3-phosphate</name>
        <dbReference type="ChEBI" id="CHEBI:59776"/>
    </ligand>
</feature>
<feature type="binding site">
    <location>
        <begin position="226"/>
        <end position="227"/>
    </location>
    <ligand>
        <name>D-glyceraldehyde 3-phosphate</name>
        <dbReference type="ChEBI" id="CHEBI:59776"/>
    </ligand>
</feature>
<feature type="binding site">
    <location>
        <position position="249"/>
    </location>
    <ligand>
        <name>D-glyceraldehyde 3-phosphate</name>
        <dbReference type="ChEBI" id="CHEBI:59776"/>
    </ligand>
</feature>
<feature type="binding site" evidence="4 5">
    <location>
        <position position="335"/>
    </location>
    <ligand>
        <name>NAD(+)</name>
        <dbReference type="ChEBI" id="CHEBI:57540"/>
    </ligand>
</feature>
<feature type="site" description="Activates thiol group during catalysis">
    <location>
        <position position="194"/>
    </location>
</feature>
<feature type="strand" evidence="8">
    <location>
        <begin position="3"/>
        <end position="8"/>
    </location>
</feature>
<feature type="helix" evidence="8">
    <location>
        <begin position="12"/>
        <end position="23"/>
    </location>
</feature>
<feature type="turn" evidence="8">
    <location>
        <begin position="28"/>
        <end position="30"/>
    </location>
</feature>
<feature type="strand" evidence="8">
    <location>
        <begin position="31"/>
        <end position="37"/>
    </location>
</feature>
<feature type="helix" evidence="8">
    <location>
        <begin position="43"/>
        <end position="51"/>
    </location>
</feature>
<feature type="turn" evidence="8">
    <location>
        <begin position="54"/>
        <end position="56"/>
    </location>
</feature>
<feature type="strand" evidence="8">
    <location>
        <begin position="63"/>
        <end position="66"/>
    </location>
</feature>
<feature type="strand" evidence="7">
    <location>
        <begin position="68"/>
        <end position="71"/>
    </location>
</feature>
<feature type="strand" evidence="8">
    <location>
        <begin position="72"/>
        <end position="74"/>
    </location>
</feature>
<feature type="strand" evidence="8">
    <location>
        <begin position="77"/>
        <end position="80"/>
    </location>
</feature>
<feature type="strand" evidence="8">
    <location>
        <begin position="83"/>
        <end position="87"/>
    </location>
</feature>
<feature type="turn" evidence="8">
    <location>
        <begin position="94"/>
        <end position="96"/>
    </location>
</feature>
<feature type="helix" evidence="8">
    <location>
        <begin position="99"/>
        <end position="102"/>
    </location>
</feature>
<feature type="strand" evidence="8">
    <location>
        <begin position="106"/>
        <end position="109"/>
    </location>
</feature>
<feature type="strand" evidence="8">
    <location>
        <begin position="111"/>
        <end position="113"/>
    </location>
</feature>
<feature type="helix" evidence="8">
    <location>
        <begin position="117"/>
        <end position="120"/>
    </location>
</feature>
<feature type="helix" evidence="8">
    <location>
        <begin position="122"/>
        <end position="125"/>
    </location>
</feature>
<feature type="strand" evidence="8">
    <location>
        <begin position="130"/>
        <end position="135"/>
    </location>
</feature>
<feature type="strand" evidence="8">
    <location>
        <begin position="138"/>
        <end position="140"/>
    </location>
</feature>
<feature type="turn" evidence="8">
    <location>
        <begin position="146"/>
        <end position="148"/>
    </location>
</feature>
<feature type="helix" evidence="8">
    <location>
        <begin position="150"/>
        <end position="152"/>
    </location>
</feature>
<feature type="turn" evidence="8">
    <location>
        <begin position="155"/>
        <end position="157"/>
    </location>
</feature>
<feature type="strand" evidence="8">
    <location>
        <begin position="159"/>
        <end position="162"/>
    </location>
</feature>
<feature type="helix" evidence="8">
    <location>
        <begin position="166"/>
        <end position="180"/>
    </location>
</feature>
<feature type="strand" evidence="8">
    <location>
        <begin position="186"/>
        <end position="195"/>
    </location>
</feature>
<feature type="strand" evidence="8">
    <location>
        <begin position="200"/>
        <end position="204"/>
    </location>
</feature>
<feature type="helix" evidence="8">
    <location>
        <begin position="212"/>
        <end position="214"/>
    </location>
</feature>
<feature type="helix" evidence="8">
    <location>
        <begin position="217"/>
        <end position="219"/>
    </location>
</feature>
<feature type="strand" evidence="8">
    <location>
        <begin position="222"/>
        <end position="225"/>
    </location>
</feature>
<feature type="helix" evidence="8">
    <location>
        <begin position="228"/>
        <end position="235"/>
    </location>
</feature>
<feature type="helix" evidence="8">
    <location>
        <begin position="237"/>
        <end position="239"/>
    </location>
</feature>
<feature type="strand" evidence="8">
    <location>
        <begin position="242"/>
        <end position="251"/>
    </location>
</feature>
<feature type="strand" evidence="8">
    <location>
        <begin position="256"/>
        <end position="263"/>
    </location>
</feature>
<feature type="helix" evidence="8">
    <location>
        <begin position="270"/>
        <end position="282"/>
    </location>
</feature>
<feature type="turn" evidence="8">
    <location>
        <begin position="283"/>
        <end position="288"/>
    </location>
</feature>
<feature type="strand" evidence="8">
    <location>
        <begin position="289"/>
        <end position="292"/>
    </location>
</feature>
<feature type="helix" evidence="8">
    <location>
        <begin position="298"/>
        <end position="301"/>
    </location>
</feature>
<feature type="strand" evidence="8">
    <location>
        <begin position="306"/>
        <end position="311"/>
    </location>
</feature>
<feature type="helix" evidence="8">
    <location>
        <begin position="312"/>
        <end position="317"/>
    </location>
</feature>
<feature type="strand" evidence="8">
    <location>
        <begin position="324"/>
        <end position="333"/>
    </location>
</feature>
<feature type="helix" evidence="8">
    <location>
        <begin position="337"/>
        <end position="356"/>
    </location>
</feature>
<organism>
    <name type="scientific">Trypanosoma cruzi</name>
    <dbReference type="NCBI Taxonomy" id="5693"/>
    <lineage>
        <taxon>Eukaryota</taxon>
        <taxon>Discoba</taxon>
        <taxon>Euglenozoa</taxon>
        <taxon>Kinetoplastea</taxon>
        <taxon>Metakinetoplastina</taxon>
        <taxon>Trypanosomatida</taxon>
        <taxon>Trypanosomatidae</taxon>
        <taxon>Trypanosoma</taxon>
        <taxon>Schizotrypanum</taxon>
    </lineage>
</organism>